<feature type="chain" id="PRO_0000117749" description="NADH-ubiquinone oxidoreductase chain 3">
    <location>
        <begin position="1"/>
        <end position="118"/>
    </location>
</feature>
<feature type="transmembrane region" description="Helical" evidence="2">
    <location>
        <begin position="9"/>
        <end position="29"/>
    </location>
</feature>
<feature type="transmembrane region" description="Helical" evidence="2">
    <location>
        <begin position="62"/>
        <end position="82"/>
    </location>
</feature>
<feature type="transmembrane region" description="Helical" evidence="2">
    <location>
        <begin position="87"/>
        <end position="107"/>
    </location>
</feature>
<keyword id="KW-0249">Electron transport</keyword>
<keyword id="KW-0472">Membrane</keyword>
<keyword id="KW-0496">Mitochondrion</keyword>
<keyword id="KW-0520">NAD</keyword>
<keyword id="KW-0679">Respiratory chain</keyword>
<keyword id="KW-0691">RNA editing</keyword>
<keyword id="KW-1278">Translocase</keyword>
<keyword id="KW-0812">Transmembrane</keyword>
<keyword id="KW-1133">Transmembrane helix</keyword>
<keyword id="KW-0813">Transport</keyword>
<keyword id="KW-0830">Ubiquinone</keyword>
<comment type="function">
    <text evidence="1">Core subunit of the mitochondrial membrane respiratory chain NADH dehydrogenase (Complex I) that is believed to belong to the minimal assembly required for catalysis. Complex I functions in the transfer of electrons from NADH to the respiratory chain. The immediate electron acceptor for the enzyme is believed to be ubiquinone (By similarity).</text>
</comment>
<comment type="catalytic activity">
    <reaction>
        <text>a ubiquinone + NADH + 5 H(+)(in) = a ubiquinol + NAD(+) + 4 H(+)(out)</text>
        <dbReference type="Rhea" id="RHEA:29091"/>
        <dbReference type="Rhea" id="RHEA-COMP:9565"/>
        <dbReference type="Rhea" id="RHEA-COMP:9566"/>
        <dbReference type="ChEBI" id="CHEBI:15378"/>
        <dbReference type="ChEBI" id="CHEBI:16389"/>
        <dbReference type="ChEBI" id="CHEBI:17976"/>
        <dbReference type="ChEBI" id="CHEBI:57540"/>
        <dbReference type="ChEBI" id="CHEBI:57945"/>
        <dbReference type="EC" id="7.1.1.2"/>
    </reaction>
</comment>
<comment type="subcellular location">
    <subcellularLocation>
        <location evidence="1">Mitochondrion membrane</location>
        <topology evidence="1">Multi-pass membrane protein</topology>
    </subcellularLocation>
</comment>
<comment type="RNA editing">
    <location>
        <position position="2" evidence="3"/>
    </location>
    <location>
        <position position="15" evidence="3"/>
    </location>
    <location>
        <position position="21" evidence="3"/>
    </location>
    <location>
        <position position="27" evidence="3"/>
    </location>
    <location>
        <position position="46" evidence="3"/>
    </location>
    <location>
        <position position="49" evidence="3"/>
    </location>
    <location>
        <position position="64" evidence="3"/>
    </location>
    <location>
        <position position="70" evidence="3"/>
    </location>
    <location>
        <position position="72" evidence="3"/>
    </location>
    <location>
        <position position="77" evidence="3"/>
    </location>
    <location>
        <position position="83" evidence="3"/>
    </location>
    <location>
        <position position="84" evidence="3"/>
    </location>
    <location>
        <position position="92" evidence="3"/>
    </location>
    <location>
        <position position="106" evidence="3"/>
    </location>
    <location>
        <position position="115" evidence="3"/>
    </location>
    <location>
        <position position="117" evidence="3"/>
    </location>
</comment>
<comment type="similarity">
    <text evidence="4">Belongs to the complex I subunit 3 family.</text>
</comment>
<organism>
    <name type="scientific">Helianthus annuus</name>
    <name type="common">Common sunflower</name>
    <dbReference type="NCBI Taxonomy" id="4232"/>
    <lineage>
        <taxon>Eukaryota</taxon>
        <taxon>Viridiplantae</taxon>
        <taxon>Streptophyta</taxon>
        <taxon>Embryophyta</taxon>
        <taxon>Tracheophyta</taxon>
        <taxon>Spermatophyta</taxon>
        <taxon>Magnoliopsida</taxon>
        <taxon>eudicotyledons</taxon>
        <taxon>Gunneridae</taxon>
        <taxon>Pentapetalae</taxon>
        <taxon>asterids</taxon>
        <taxon>campanulids</taxon>
        <taxon>Asterales</taxon>
        <taxon>Asteraceae</taxon>
        <taxon>Asteroideae</taxon>
        <taxon>Heliantheae alliance</taxon>
        <taxon>Heliantheae</taxon>
        <taxon>Helianthus</taxon>
    </lineage>
</organism>
<gene>
    <name type="primary">ND3</name>
    <name type="synonym">NAD3</name>
</gene>
<accession>P60159</accession>
<accession>P18903</accession>
<accession>Q96032</accession>
<geneLocation type="mitochondrion"/>
<dbReference type="EC" id="7.1.1.2"/>
<dbReference type="EMBL" id="Z49775">
    <property type="protein sequence ID" value="CAA89856.1"/>
    <property type="molecule type" value="mRNA"/>
</dbReference>
<dbReference type="PIR" id="S71077">
    <property type="entry name" value="S71077"/>
</dbReference>
<dbReference type="SMR" id="P60159"/>
<dbReference type="GO" id="GO:0031966">
    <property type="term" value="C:mitochondrial membrane"/>
    <property type="evidence" value="ECO:0007669"/>
    <property type="project" value="UniProtKB-SubCell"/>
</dbReference>
<dbReference type="GO" id="GO:0008137">
    <property type="term" value="F:NADH dehydrogenase (ubiquinone) activity"/>
    <property type="evidence" value="ECO:0007669"/>
    <property type="project" value="UniProtKB-EC"/>
</dbReference>
<dbReference type="FunFam" id="1.20.58.1610:FF:000006">
    <property type="entry name" value="NADH-ubiquinone oxidoreductase chain 3"/>
    <property type="match status" value="1"/>
</dbReference>
<dbReference type="Gene3D" id="1.20.58.1610">
    <property type="entry name" value="NADH:ubiquinone/plastoquinone oxidoreductase, chain 3"/>
    <property type="match status" value="1"/>
</dbReference>
<dbReference type="HAMAP" id="MF_01394">
    <property type="entry name" value="NDH1_NuoA"/>
    <property type="match status" value="1"/>
</dbReference>
<dbReference type="InterPro" id="IPR023043">
    <property type="entry name" value="NAD(P)H_OxRDtase_bac/plastid"/>
</dbReference>
<dbReference type="InterPro" id="IPR000440">
    <property type="entry name" value="NADH_UbQ/plastoQ_OxRdtase_su3"/>
</dbReference>
<dbReference type="InterPro" id="IPR038430">
    <property type="entry name" value="NDAH_ubi_oxred_su3_sf"/>
</dbReference>
<dbReference type="PANTHER" id="PTHR11058">
    <property type="entry name" value="NADH-UBIQUINONE OXIDOREDUCTASE CHAIN 3"/>
    <property type="match status" value="1"/>
</dbReference>
<dbReference type="PANTHER" id="PTHR11058:SF9">
    <property type="entry name" value="NADH-UBIQUINONE OXIDOREDUCTASE CHAIN 3"/>
    <property type="match status" value="1"/>
</dbReference>
<dbReference type="Pfam" id="PF00507">
    <property type="entry name" value="Oxidored_q4"/>
    <property type="match status" value="1"/>
</dbReference>
<protein>
    <recommendedName>
        <fullName>NADH-ubiquinone oxidoreductase chain 3</fullName>
        <ecNumber>7.1.1.2</ecNumber>
    </recommendedName>
    <alternativeName>
        <fullName>NADH dehydrogenase subunit 3</fullName>
    </alternativeName>
</protein>
<proteinExistence type="evidence at transcript level"/>
<name>NU3M_HELAN</name>
<sequence>MLEFAPICIYLVISLLVSLILLGVPFLFASNSSTYPEKLSAYECGFDPFGDARSRFDIRFYLVSILFIIFDLEVTFFFPWAVSLNKIDLFGFWSMMAFLLILTIGFLYEWKRGALDWE</sequence>
<evidence type="ECO:0000250" key="1"/>
<evidence type="ECO:0000255" key="2"/>
<evidence type="ECO:0000269" key="3">
    <source>
    </source>
</evidence>
<evidence type="ECO:0000305" key="4"/>
<reference key="1">
    <citation type="journal article" date="1996" name="Mol. Gen. Genet.">
        <title>Conservation of the organization of the mitochondrial nad3 and rps12 genes in evolutionarily distant angiosperms.</title>
        <authorList>
            <person name="Perrotta G."/>
            <person name="Regina T.M.R."/>
            <person name="Ceci L.R."/>
            <person name="Quagliariello C.C."/>
        </authorList>
    </citation>
    <scope>NUCLEOTIDE SEQUENCE [MRNA]</scope>
    <scope>RNA EDITING</scope>
    <source>
        <strain>cv. Gloriasol</strain>
        <tissue>Etiolated shoot</tissue>
    </source>
</reference>